<organism>
    <name type="scientific">Bacillus subtilis (strain 168)</name>
    <dbReference type="NCBI Taxonomy" id="224308"/>
    <lineage>
        <taxon>Bacteria</taxon>
        <taxon>Bacillati</taxon>
        <taxon>Bacillota</taxon>
        <taxon>Bacilli</taxon>
        <taxon>Bacillales</taxon>
        <taxon>Bacillaceae</taxon>
        <taxon>Bacillus</taxon>
    </lineage>
</organism>
<dbReference type="EMBL" id="X56049">
    <property type="protein sequence ID" value="CAA39524.1"/>
    <property type="status" value="ALT_SEQ"/>
    <property type="molecule type" value="Genomic_DNA"/>
</dbReference>
<dbReference type="EMBL" id="AL009126">
    <property type="protein sequence ID" value="CAB13498.1"/>
    <property type="molecule type" value="Genomic_DNA"/>
</dbReference>
<dbReference type="PIR" id="A42366">
    <property type="entry name" value="A42366"/>
</dbReference>
<dbReference type="RefSeq" id="NP_389507.1">
    <property type="nucleotide sequence ID" value="NC_000964.3"/>
</dbReference>
<dbReference type="RefSeq" id="WP_003231977.1">
    <property type="nucleotide sequence ID" value="NZ_OZ025638.1"/>
</dbReference>
<dbReference type="SMR" id="P20487"/>
<dbReference type="DIP" id="DIP-59544N"/>
<dbReference type="FunCoup" id="P20487">
    <property type="interactions" value="77"/>
</dbReference>
<dbReference type="IntAct" id="P20487">
    <property type="interactions" value="1"/>
</dbReference>
<dbReference type="STRING" id="224308.BSU16250"/>
<dbReference type="PaxDb" id="224308-BSU16250"/>
<dbReference type="EnsemblBacteria" id="CAB13498">
    <property type="protein sequence ID" value="CAB13498"/>
    <property type="gene ID" value="BSU_16250"/>
</dbReference>
<dbReference type="GeneID" id="940137"/>
<dbReference type="KEGG" id="bsu:BSU16250"/>
<dbReference type="PATRIC" id="fig|224308.179.peg.1765"/>
<dbReference type="eggNOG" id="COG2882">
    <property type="taxonomic scope" value="Bacteria"/>
</dbReference>
<dbReference type="InParanoid" id="P20487"/>
<dbReference type="OrthoDB" id="2968361at2"/>
<dbReference type="BioCyc" id="BSUB:BSU16250-MONOMER"/>
<dbReference type="Proteomes" id="UP000001570">
    <property type="component" value="Chromosome"/>
</dbReference>
<dbReference type="GO" id="GO:0009288">
    <property type="term" value="C:bacterial-type flagellum"/>
    <property type="evidence" value="ECO:0007669"/>
    <property type="project" value="InterPro"/>
</dbReference>
<dbReference type="GO" id="GO:0005886">
    <property type="term" value="C:plasma membrane"/>
    <property type="evidence" value="ECO:0007669"/>
    <property type="project" value="UniProtKB-SubCell"/>
</dbReference>
<dbReference type="GO" id="GO:0044780">
    <property type="term" value="P:bacterial-type flagellum assembly"/>
    <property type="evidence" value="ECO:0000315"/>
    <property type="project" value="CACAO"/>
</dbReference>
<dbReference type="GO" id="GO:0071978">
    <property type="term" value="P:bacterial-type flagellum-dependent swarming motility"/>
    <property type="evidence" value="ECO:0000315"/>
    <property type="project" value="CACAO"/>
</dbReference>
<dbReference type="GO" id="GO:0006935">
    <property type="term" value="P:chemotaxis"/>
    <property type="evidence" value="ECO:0007669"/>
    <property type="project" value="UniProtKB-KW"/>
</dbReference>
<dbReference type="GO" id="GO:0015031">
    <property type="term" value="P:protein transport"/>
    <property type="evidence" value="ECO:0007669"/>
    <property type="project" value="UniProtKB-KW"/>
</dbReference>
<dbReference type="Gene3D" id="1.10.287.1700">
    <property type="match status" value="1"/>
</dbReference>
<dbReference type="InterPro" id="IPR053716">
    <property type="entry name" value="Flag_assembly_chemotaxis_eff"/>
</dbReference>
<dbReference type="InterPro" id="IPR012823">
    <property type="entry name" value="Flagell_FliJ"/>
</dbReference>
<dbReference type="NCBIfam" id="TIGR02473">
    <property type="entry name" value="flagell_FliJ"/>
    <property type="match status" value="1"/>
</dbReference>
<dbReference type="Pfam" id="PF02050">
    <property type="entry name" value="FliJ"/>
    <property type="match status" value="1"/>
</dbReference>
<proteinExistence type="evidence at protein level"/>
<evidence type="ECO:0000250" key="1"/>
<evidence type="ECO:0000269" key="2">
    <source>
    </source>
</evidence>
<evidence type="ECO:0000305" key="3"/>
<gene>
    <name type="primary">fliJ</name>
    <name type="synonym">cheF</name>
    <name type="ordered locus">BSU16250</name>
</gene>
<reference key="1">
    <citation type="journal article" date="1991" name="J. Bacteriol.">
        <title>Properties of the Bacillus subtilis chemotaxis protein CheF, a homolog of the Salmonella typhimurium flagellar protein FliJ.</title>
        <authorList>
            <person name="Ying C."/>
            <person name="Scoffone F."/>
            <person name="Albertini A.M."/>
            <person name="Galizzi A."/>
            <person name="Ordal G.W."/>
        </authorList>
    </citation>
    <scope>NUCLEOTIDE SEQUENCE [GENOMIC DNA]</scope>
    <scope>PROTEIN SEQUENCE OF 2-6</scope>
    <source>
        <strain>168</strain>
    </source>
</reference>
<reference key="2">
    <citation type="journal article" date="1991" name="J. Bacteriol.">
        <title>The flaA locus of Bacillus subtilis is part of a large operon coding for flagellar structures, motility functions, and an ATPase-like polypeptide.</title>
        <authorList>
            <person name="Albertini A.M."/>
            <person name="Caramori T."/>
            <person name="Crabb W.D."/>
            <person name="Scoffone F."/>
            <person name="Galizzi A."/>
        </authorList>
    </citation>
    <scope>NUCLEOTIDE SEQUENCE [GENOMIC DNA]</scope>
    <source>
        <strain>168</strain>
    </source>
</reference>
<reference key="3">
    <citation type="journal article" date="1989" name="J. Bacteriol.">
        <title>Nucleotide sequence and expression of cheF, an essential gene for chemotaxis in Bacillus subtilis.</title>
        <authorList>
            <person name="Ying C."/>
            <person name="Ordal G.W."/>
        </authorList>
    </citation>
    <scope>NUCLEOTIDE SEQUENCE [GENOMIC DNA]</scope>
    <source>
        <strain>OI1878</strain>
    </source>
</reference>
<reference key="4">
    <citation type="journal article" date="1997" name="Nature">
        <title>The complete genome sequence of the Gram-positive bacterium Bacillus subtilis.</title>
        <authorList>
            <person name="Kunst F."/>
            <person name="Ogasawara N."/>
            <person name="Moszer I."/>
            <person name="Albertini A.M."/>
            <person name="Alloni G."/>
            <person name="Azevedo V."/>
            <person name="Bertero M.G."/>
            <person name="Bessieres P."/>
            <person name="Bolotin A."/>
            <person name="Borchert S."/>
            <person name="Borriss R."/>
            <person name="Boursier L."/>
            <person name="Brans A."/>
            <person name="Braun M."/>
            <person name="Brignell S.C."/>
            <person name="Bron S."/>
            <person name="Brouillet S."/>
            <person name="Bruschi C.V."/>
            <person name="Caldwell B."/>
            <person name="Capuano V."/>
            <person name="Carter N.M."/>
            <person name="Choi S.-K."/>
            <person name="Codani J.-J."/>
            <person name="Connerton I.F."/>
            <person name="Cummings N.J."/>
            <person name="Daniel R.A."/>
            <person name="Denizot F."/>
            <person name="Devine K.M."/>
            <person name="Duesterhoeft A."/>
            <person name="Ehrlich S.D."/>
            <person name="Emmerson P.T."/>
            <person name="Entian K.-D."/>
            <person name="Errington J."/>
            <person name="Fabret C."/>
            <person name="Ferrari E."/>
            <person name="Foulger D."/>
            <person name="Fritz C."/>
            <person name="Fujita M."/>
            <person name="Fujita Y."/>
            <person name="Fuma S."/>
            <person name="Galizzi A."/>
            <person name="Galleron N."/>
            <person name="Ghim S.-Y."/>
            <person name="Glaser P."/>
            <person name="Goffeau A."/>
            <person name="Golightly E.J."/>
            <person name="Grandi G."/>
            <person name="Guiseppi G."/>
            <person name="Guy B.J."/>
            <person name="Haga K."/>
            <person name="Haiech J."/>
            <person name="Harwood C.R."/>
            <person name="Henaut A."/>
            <person name="Hilbert H."/>
            <person name="Holsappel S."/>
            <person name="Hosono S."/>
            <person name="Hullo M.-F."/>
            <person name="Itaya M."/>
            <person name="Jones L.-M."/>
            <person name="Joris B."/>
            <person name="Karamata D."/>
            <person name="Kasahara Y."/>
            <person name="Klaerr-Blanchard M."/>
            <person name="Klein C."/>
            <person name="Kobayashi Y."/>
            <person name="Koetter P."/>
            <person name="Koningstein G."/>
            <person name="Krogh S."/>
            <person name="Kumano M."/>
            <person name="Kurita K."/>
            <person name="Lapidus A."/>
            <person name="Lardinois S."/>
            <person name="Lauber J."/>
            <person name="Lazarevic V."/>
            <person name="Lee S.-M."/>
            <person name="Levine A."/>
            <person name="Liu H."/>
            <person name="Masuda S."/>
            <person name="Mauel C."/>
            <person name="Medigue C."/>
            <person name="Medina N."/>
            <person name="Mellado R.P."/>
            <person name="Mizuno M."/>
            <person name="Moestl D."/>
            <person name="Nakai S."/>
            <person name="Noback M."/>
            <person name="Noone D."/>
            <person name="O'Reilly M."/>
            <person name="Ogawa K."/>
            <person name="Ogiwara A."/>
            <person name="Oudega B."/>
            <person name="Park S.-H."/>
            <person name="Parro V."/>
            <person name="Pohl T.M."/>
            <person name="Portetelle D."/>
            <person name="Porwollik S."/>
            <person name="Prescott A.M."/>
            <person name="Presecan E."/>
            <person name="Pujic P."/>
            <person name="Purnelle B."/>
            <person name="Rapoport G."/>
            <person name="Rey M."/>
            <person name="Reynolds S."/>
            <person name="Rieger M."/>
            <person name="Rivolta C."/>
            <person name="Rocha E."/>
            <person name="Roche B."/>
            <person name="Rose M."/>
            <person name="Sadaie Y."/>
            <person name="Sato T."/>
            <person name="Scanlan E."/>
            <person name="Schleich S."/>
            <person name="Schroeter R."/>
            <person name="Scoffone F."/>
            <person name="Sekiguchi J."/>
            <person name="Sekowska A."/>
            <person name="Seror S.J."/>
            <person name="Serror P."/>
            <person name="Shin B.-S."/>
            <person name="Soldo B."/>
            <person name="Sorokin A."/>
            <person name="Tacconi E."/>
            <person name="Takagi T."/>
            <person name="Takahashi H."/>
            <person name="Takemaru K."/>
            <person name="Takeuchi M."/>
            <person name="Tamakoshi A."/>
            <person name="Tanaka T."/>
            <person name="Terpstra P."/>
            <person name="Tognoni A."/>
            <person name="Tosato V."/>
            <person name="Uchiyama S."/>
            <person name="Vandenbol M."/>
            <person name="Vannier F."/>
            <person name="Vassarotti A."/>
            <person name="Viari A."/>
            <person name="Wambutt R."/>
            <person name="Wedler E."/>
            <person name="Wedler H."/>
            <person name="Weitzenegger T."/>
            <person name="Winters P."/>
            <person name="Wipat A."/>
            <person name="Yamamoto H."/>
            <person name="Yamane K."/>
            <person name="Yasumoto K."/>
            <person name="Yata K."/>
            <person name="Yoshida K."/>
            <person name="Yoshikawa H.-F."/>
            <person name="Zumstein E."/>
            <person name="Yoshikawa H."/>
            <person name="Danchin A."/>
        </authorList>
    </citation>
    <scope>NUCLEOTIDE SEQUENCE [LARGE SCALE GENOMIC DNA]</scope>
    <source>
        <strain>168</strain>
    </source>
</reference>
<protein>
    <recommendedName>
        <fullName>Flagellar FliJ protein</fullName>
    </recommendedName>
    <alternativeName>
        <fullName>Chemotaxis CheF protein</fullName>
    </alternativeName>
</protein>
<accession>P20487</accession>
<sequence>MAYQFRFQKLLELKENEKDQSLSEYQQSVSEFENVAEKLYENMSKKELLEQNKEKKLKSGMSVQEMRHYQQFVSNLDNTIYHYQKLVIMKRNQMNQKQEILTEKNIEVKKFEKMREKQFKMFALEDKAAEMKEMDDISIKQFMIQGH</sequence>
<keyword id="KW-1005">Bacterial flagellum biogenesis</keyword>
<keyword id="KW-1006">Bacterial flagellum protein export</keyword>
<keyword id="KW-1003">Cell membrane</keyword>
<keyword id="KW-0145">Chemotaxis</keyword>
<keyword id="KW-0903">Direct protein sequencing</keyword>
<keyword id="KW-0472">Membrane</keyword>
<keyword id="KW-0653">Protein transport</keyword>
<keyword id="KW-1185">Reference proteome</keyword>
<keyword id="KW-0813">Transport</keyword>
<feature type="initiator methionine" description="Removed" evidence="2">
    <location>
        <position position="1"/>
    </location>
</feature>
<feature type="chain" id="PRO_0000180896" description="Flagellar FliJ protein">
    <location>
        <begin position="2"/>
        <end position="147"/>
    </location>
</feature>
<comment type="function">
    <text evidence="1">Flagellar protein that affects chemotactic events.</text>
</comment>
<comment type="interaction">
    <interactant intactId="EBI-15858572">
        <id>P20487</id>
    </interactant>
    <interactant intactId="EBI-15858509">
        <id>P35620</id>
        <label>flhA</label>
    </interactant>
    <organismsDiffer>false</organismsDiffer>
    <experiments>3</experiments>
</comment>
<comment type="subcellular location">
    <subcellularLocation>
        <location>Cell membrane</location>
        <topology>Peripheral membrane protein</topology>
        <orientation>Cytoplasmic side</orientation>
    </subcellularLocation>
</comment>
<comment type="similarity">
    <text evidence="3">Belongs to the FliJ family.</text>
</comment>
<comment type="sequence caution" evidence="3">
    <conflict type="miscellaneous discrepancy">
        <sequence resource="EMBL-CDS" id="CAA39524"/>
    </conflict>
</comment>
<name>FLIJ_BACSU</name>